<organism>
    <name type="scientific">Neisseria gonorrhoeae (strain ATCC 700825 / FA 1090)</name>
    <dbReference type="NCBI Taxonomy" id="242231"/>
    <lineage>
        <taxon>Bacteria</taxon>
        <taxon>Pseudomonadati</taxon>
        <taxon>Pseudomonadota</taxon>
        <taxon>Betaproteobacteria</taxon>
        <taxon>Neisseriales</taxon>
        <taxon>Neisseriaceae</taxon>
        <taxon>Neisseria</taxon>
    </lineage>
</organism>
<gene>
    <name evidence="2" type="primary">nuoB</name>
    <name type="ordered locus">NGO_1750</name>
</gene>
<keyword id="KW-0004">4Fe-4S</keyword>
<keyword id="KW-0997">Cell inner membrane</keyword>
<keyword id="KW-1003">Cell membrane</keyword>
<keyword id="KW-0408">Iron</keyword>
<keyword id="KW-0411">Iron-sulfur</keyword>
<keyword id="KW-0472">Membrane</keyword>
<keyword id="KW-0479">Metal-binding</keyword>
<keyword id="KW-0520">NAD</keyword>
<keyword id="KW-0874">Quinone</keyword>
<keyword id="KW-1185">Reference proteome</keyword>
<keyword id="KW-1278">Translocase</keyword>
<keyword id="KW-0813">Transport</keyword>
<keyword id="KW-0830">Ubiquinone</keyword>
<dbReference type="EC" id="7.1.1.-" evidence="2"/>
<dbReference type="EMBL" id="AE004969">
    <property type="protein sequence ID" value="AAW90371.1"/>
    <property type="molecule type" value="Genomic_DNA"/>
</dbReference>
<dbReference type="RefSeq" id="WP_003703228.1">
    <property type="nucleotide sequence ID" value="NC_002946.2"/>
</dbReference>
<dbReference type="RefSeq" id="YP_208783.1">
    <property type="nucleotide sequence ID" value="NC_002946.2"/>
</dbReference>
<dbReference type="SMR" id="Q5F616"/>
<dbReference type="STRING" id="242231.NGO_1750"/>
<dbReference type="KEGG" id="ngo:NGO_1750"/>
<dbReference type="PATRIC" id="fig|242231.10.peg.2091"/>
<dbReference type="HOGENOM" id="CLU_055737_7_3_4"/>
<dbReference type="Proteomes" id="UP000000535">
    <property type="component" value="Chromosome"/>
</dbReference>
<dbReference type="GO" id="GO:0005886">
    <property type="term" value="C:plasma membrane"/>
    <property type="evidence" value="ECO:0007669"/>
    <property type="project" value="UniProtKB-SubCell"/>
</dbReference>
<dbReference type="GO" id="GO:0045271">
    <property type="term" value="C:respiratory chain complex I"/>
    <property type="evidence" value="ECO:0007669"/>
    <property type="project" value="TreeGrafter"/>
</dbReference>
<dbReference type="GO" id="GO:0051539">
    <property type="term" value="F:4 iron, 4 sulfur cluster binding"/>
    <property type="evidence" value="ECO:0007669"/>
    <property type="project" value="UniProtKB-KW"/>
</dbReference>
<dbReference type="GO" id="GO:0005506">
    <property type="term" value="F:iron ion binding"/>
    <property type="evidence" value="ECO:0007669"/>
    <property type="project" value="UniProtKB-UniRule"/>
</dbReference>
<dbReference type="GO" id="GO:0008137">
    <property type="term" value="F:NADH dehydrogenase (ubiquinone) activity"/>
    <property type="evidence" value="ECO:0007669"/>
    <property type="project" value="InterPro"/>
</dbReference>
<dbReference type="GO" id="GO:0050136">
    <property type="term" value="F:NADH:ubiquinone reductase (non-electrogenic) activity"/>
    <property type="evidence" value="ECO:0007669"/>
    <property type="project" value="UniProtKB-UniRule"/>
</dbReference>
<dbReference type="GO" id="GO:0048038">
    <property type="term" value="F:quinone binding"/>
    <property type="evidence" value="ECO:0007669"/>
    <property type="project" value="UniProtKB-KW"/>
</dbReference>
<dbReference type="GO" id="GO:0009060">
    <property type="term" value="P:aerobic respiration"/>
    <property type="evidence" value="ECO:0007669"/>
    <property type="project" value="TreeGrafter"/>
</dbReference>
<dbReference type="GO" id="GO:0015990">
    <property type="term" value="P:electron transport coupled proton transport"/>
    <property type="evidence" value="ECO:0007669"/>
    <property type="project" value="TreeGrafter"/>
</dbReference>
<dbReference type="FunFam" id="3.40.50.12280:FF:000001">
    <property type="entry name" value="NADH-quinone oxidoreductase subunit B 2"/>
    <property type="match status" value="1"/>
</dbReference>
<dbReference type="Gene3D" id="3.40.50.12280">
    <property type="match status" value="1"/>
</dbReference>
<dbReference type="HAMAP" id="MF_01356">
    <property type="entry name" value="NDH1_NuoB"/>
    <property type="match status" value="1"/>
</dbReference>
<dbReference type="InterPro" id="IPR006137">
    <property type="entry name" value="NADH_UbQ_OxRdtase-like_20kDa"/>
</dbReference>
<dbReference type="InterPro" id="IPR006138">
    <property type="entry name" value="NADH_UQ_OxRdtase_20Kd_su"/>
</dbReference>
<dbReference type="NCBIfam" id="TIGR01957">
    <property type="entry name" value="nuoB_fam"/>
    <property type="match status" value="1"/>
</dbReference>
<dbReference type="NCBIfam" id="NF005012">
    <property type="entry name" value="PRK06411.1"/>
    <property type="match status" value="1"/>
</dbReference>
<dbReference type="PANTHER" id="PTHR11995">
    <property type="entry name" value="NADH DEHYDROGENASE"/>
    <property type="match status" value="1"/>
</dbReference>
<dbReference type="PANTHER" id="PTHR11995:SF14">
    <property type="entry name" value="NADH DEHYDROGENASE [UBIQUINONE] IRON-SULFUR PROTEIN 7, MITOCHONDRIAL"/>
    <property type="match status" value="1"/>
</dbReference>
<dbReference type="Pfam" id="PF01058">
    <property type="entry name" value="Oxidored_q6"/>
    <property type="match status" value="1"/>
</dbReference>
<dbReference type="SUPFAM" id="SSF56770">
    <property type="entry name" value="HydA/Nqo6-like"/>
    <property type="match status" value="1"/>
</dbReference>
<dbReference type="PROSITE" id="PS01150">
    <property type="entry name" value="COMPLEX1_20K"/>
    <property type="match status" value="1"/>
</dbReference>
<comment type="function">
    <text evidence="1">NDH-1 shuttles electrons from NADH, via FMN and iron-sulfur (Fe-S) centers, to quinones in the respiratory chain. Couples the redox reaction to proton translocation (for every two electrons transferred, four hydrogen ions are translocated across the cytoplasmic membrane), and thus conserves the redox energy in a proton gradient (By similarity).</text>
</comment>
<comment type="catalytic activity">
    <reaction evidence="2">
        <text>a quinone + NADH + 5 H(+)(in) = a quinol + NAD(+) + 4 H(+)(out)</text>
        <dbReference type="Rhea" id="RHEA:57888"/>
        <dbReference type="ChEBI" id="CHEBI:15378"/>
        <dbReference type="ChEBI" id="CHEBI:24646"/>
        <dbReference type="ChEBI" id="CHEBI:57540"/>
        <dbReference type="ChEBI" id="CHEBI:57945"/>
        <dbReference type="ChEBI" id="CHEBI:132124"/>
    </reaction>
</comment>
<comment type="cofactor">
    <cofactor evidence="2">
        <name>[4Fe-4S] cluster</name>
        <dbReference type="ChEBI" id="CHEBI:49883"/>
    </cofactor>
    <text evidence="2">Binds 1 [4Fe-4S] cluster.</text>
</comment>
<comment type="subunit">
    <text evidence="2">NDH-1 is composed of 14 different subunits. Subunits NuoB, C, D, E, F, and G constitute the peripheral sector of the complex.</text>
</comment>
<comment type="subcellular location">
    <subcellularLocation>
        <location evidence="2">Cell inner membrane</location>
        <topology evidence="2">Peripheral membrane protein</topology>
        <orientation evidence="2">Cytoplasmic side</orientation>
    </subcellularLocation>
</comment>
<comment type="similarity">
    <text evidence="2">Belongs to the complex I 20 kDa subunit family.</text>
</comment>
<sequence>MGIEGVLKKGFITTSADTVLNHMRTGSLWPVTFGLACCAVEMMHAGMARYDLDRFGIIFRPSPRQADLMIVAGTLTNKMAPALRRVYDQLAEPRWVLSMGSCANGGGYYHYSYSVVRGADRVVPVDVYVPGCPPTAEALIYGLIQLQQKIKRTSTIARDE</sequence>
<proteinExistence type="inferred from homology"/>
<feature type="chain" id="PRO_0000358427" description="NADH-quinone oxidoreductase subunit B">
    <location>
        <begin position="1"/>
        <end position="160"/>
    </location>
</feature>
<feature type="binding site" evidence="2">
    <location>
        <position position="37"/>
    </location>
    <ligand>
        <name>[4Fe-4S] cluster</name>
        <dbReference type="ChEBI" id="CHEBI:49883"/>
    </ligand>
</feature>
<feature type="binding site" evidence="2">
    <location>
        <position position="38"/>
    </location>
    <ligand>
        <name>[4Fe-4S] cluster</name>
        <dbReference type="ChEBI" id="CHEBI:49883"/>
    </ligand>
</feature>
<feature type="binding site" evidence="2">
    <location>
        <position position="102"/>
    </location>
    <ligand>
        <name>[4Fe-4S] cluster</name>
        <dbReference type="ChEBI" id="CHEBI:49883"/>
    </ligand>
</feature>
<feature type="binding site" evidence="2">
    <location>
        <position position="132"/>
    </location>
    <ligand>
        <name>[4Fe-4S] cluster</name>
        <dbReference type="ChEBI" id="CHEBI:49883"/>
    </ligand>
</feature>
<name>NUOB_NEIG1</name>
<reference key="1">
    <citation type="submission" date="2003-03" db="EMBL/GenBank/DDBJ databases">
        <title>The complete genome sequence of Neisseria gonorrhoeae.</title>
        <authorList>
            <person name="Lewis L.A."/>
            <person name="Gillaspy A.F."/>
            <person name="McLaughlin R.E."/>
            <person name="Gipson M."/>
            <person name="Ducey T.F."/>
            <person name="Ownbey T."/>
            <person name="Hartman K."/>
            <person name="Nydick C."/>
            <person name="Carson M.B."/>
            <person name="Vaughn J."/>
            <person name="Thomson C."/>
            <person name="Song L."/>
            <person name="Lin S."/>
            <person name="Yuan X."/>
            <person name="Najar F."/>
            <person name="Zhan M."/>
            <person name="Ren Q."/>
            <person name="Zhu H."/>
            <person name="Qi S."/>
            <person name="Kenton S.M."/>
            <person name="Lai H."/>
            <person name="White J.D."/>
            <person name="Clifton S."/>
            <person name="Roe B.A."/>
            <person name="Dyer D.W."/>
        </authorList>
    </citation>
    <scope>NUCLEOTIDE SEQUENCE [LARGE SCALE GENOMIC DNA]</scope>
    <source>
        <strain>ATCC 700825 / FA 1090</strain>
    </source>
</reference>
<protein>
    <recommendedName>
        <fullName evidence="2">NADH-quinone oxidoreductase subunit B</fullName>
        <ecNumber evidence="2">7.1.1.-</ecNumber>
    </recommendedName>
    <alternativeName>
        <fullName evidence="2">NADH dehydrogenase I subunit B</fullName>
    </alternativeName>
    <alternativeName>
        <fullName evidence="2">NDH-1 subunit B</fullName>
    </alternativeName>
</protein>
<accession>Q5F616</accession>
<evidence type="ECO:0000250" key="1"/>
<evidence type="ECO:0000255" key="2">
    <source>
        <dbReference type="HAMAP-Rule" id="MF_01356"/>
    </source>
</evidence>